<protein>
    <recommendedName>
        <fullName evidence="1">tRNA(Met) cytidine acetate ligase</fullName>
        <ecNumber evidence="1">6.3.4.-</ecNumber>
    </recommendedName>
</protein>
<keyword id="KW-0067">ATP-binding</keyword>
<keyword id="KW-0963">Cytoplasm</keyword>
<keyword id="KW-0436">Ligase</keyword>
<keyword id="KW-0547">Nucleotide-binding</keyword>
<keyword id="KW-0694">RNA-binding</keyword>
<keyword id="KW-0819">tRNA processing</keyword>
<keyword id="KW-0820">tRNA-binding</keyword>
<dbReference type="EC" id="6.3.4.-" evidence="1"/>
<dbReference type="EMBL" id="AL766852">
    <property type="protein sequence ID" value="CAD47359.1"/>
    <property type="molecule type" value="Genomic_DNA"/>
</dbReference>
<dbReference type="RefSeq" id="WP_000218982.1">
    <property type="nucleotide sequence ID" value="NC_004368.1"/>
</dbReference>
<dbReference type="SMR" id="Q8E3Q6"/>
<dbReference type="KEGG" id="san:gbs1700"/>
<dbReference type="eggNOG" id="COG1323">
    <property type="taxonomic scope" value="Bacteria"/>
</dbReference>
<dbReference type="HOGENOM" id="CLU_038915_0_2_9"/>
<dbReference type="Proteomes" id="UP000000823">
    <property type="component" value="Chromosome"/>
</dbReference>
<dbReference type="GO" id="GO:0005737">
    <property type="term" value="C:cytoplasm"/>
    <property type="evidence" value="ECO:0007669"/>
    <property type="project" value="UniProtKB-SubCell"/>
</dbReference>
<dbReference type="GO" id="GO:0005524">
    <property type="term" value="F:ATP binding"/>
    <property type="evidence" value="ECO:0007669"/>
    <property type="project" value="UniProtKB-KW"/>
</dbReference>
<dbReference type="GO" id="GO:0016879">
    <property type="term" value="F:ligase activity, forming carbon-nitrogen bonds"/>
    <property type="evidence" value="ECO:0007669"/>
    <property type="project" value="UniProtKB-UniRule"/>
</dbReference>
<dbReference type="GO" id="GO:0000049">
    <property type="term" value="F:tRNA binding"/>
    <property type="evidence" value="ECO:0007669"/>
    <property type="project" value="UniProtKB-KW"/>
</dbReference>
<dbReference type="GO" id="GO:0006400">
    <property type="term" value="P:tRNA modification"/>
    <property type="evidence" value="ECO:0007669"/>
    <property type="project" value="UniProtKB-UniRule"/>
</dbReference>
<dbReference type="Gene3D" id="3.40.50.620">
    <property type="entry name" value="HUPs"/>
    <property type="match status" value="1"/>
</dbReference>
<dbReference type="HAMAP" id="MF_01539">
    <property type="entry name" value="TmcAL"/>
    <property type="match status" value="1"/>
</dbReference>
<dbReference type="InterPro" id="IPR014729">
    <property type="entry name" value="Rossmann-like_a/b/a_fold"/>
</dbReference>
<dbReference type="InterPro" id="IPR008513">
    <property type="entry name" value="tRNA(Met)_cyd_acetate_ligase"/>
</dbReference>
<dbReference type="NCBIfam" id="NF010191">
    <property type="entry name" value="PRK13670.1"/>
    <property type="match status" value="1"/>
</dbReference>
<dbReference type="PANTHER" id="PTHR37825">
    <property type="entry name" value="TRNA(MET) CYTIDINE ACETATE LIGASE"/>
    <property type="match status" value="1"/>
</dbReference>
<dbReference type="PANTHER" id="PTHR37825:SF1">
    <property type="entry name" value="TRNA(MET) CYTIDINE ACETATE LIGASE"/>
    <property type="match status" value="1"/>
</dbReference>
<dbReference type="Pfam" id="PF05636">
    <property type="entry name" value="HIGH_NTase1"/>
    <property type="match status" value="1"/>
</dbReference>
<dbReference type="SUPFAM" id="SSF52374">
    <property type="entry name" value="Nucleotidylyl transferase"/>
    <property type="match status" value="1"/>
</dbReference>
<comment type="function">
    <text evidence="1">Catalyzes the formation of N(4)-acetylcytidine (ac(4)C) at the wobble position of elongator tRNA(Met), using acetate and ATP as substrates. First activates an acetate ion to form acetyladenylate (Ac-AMP) and then transfers the acetyl group to tRNA to form ac(4)C34.</text>
</comment>
<comment type="catalytic activity">
    <reaction evidence="1">
        <text>cytidine(34) in elongator tRNA(Met) + acetate + ATP = N(4)-acetylcytidine(34) in elongator tRNA(Met) + AMP + diphosphate</text>
        <dbReference type="Rhea" id="RHEA:58144"/>
        <dbReference type="Rhea" id="RHEA-COMP:10693"/>
        <dbReference type="Rhea" id="RHEA-COMP:10694"/>
        <dbReference type="ChEBI" id="CHEBI:30089"/>
        <dbReference type="ChEBI" id="CHEBI:30616"/>
        <dbReference type="ChEBI" id="CHEBI:33019"/>
        <dbReference type="ChEBI" id="CHEBI:74900"/>
        <dbReference type="ChEBI" id="CHEBI:82748"/>
        <dbReference type="ChEBI" id="CHEBI:456215"/>
    </reaction>
</comment>
<comment type="subcellular location">
    <subcellularLocation>
        <location evidence="1">Cytoplasm</location>
    </subcellularLocation>
</comment>
<comment type="similarity">
    <text evidence="1">Belongs to the TmcAL family.</text>
</comment>
<feature type="chain" id="PRO_0000147186" description="tRNA(Met) cytidine acetate ligase">
    <location>
        <begin position="1"/>
        <end position="369"/>
    </location>
</feature>
<feature type="binding site" evidence="1">
    <location>
        <begin position="7"/>
        <end position="20"/>
    </location>
    <ligand>
        <name>ATP</name>
        <dbReference type="ChEBI" id="CHEBI:30616"/>
    </ligand>
</feature>
<feature type="binding site" evidence="1">
    <location>
        <position position="96"/>
    </location>
    <ligand>
        <name>ATP</name>
        <dbReference type="ChEBI" id="CHEBI:30616"/>
    </ligand>
</feature>
<feature type="binding site" evidence="1">
    <location>
        <position position="152"/>
    </location>
    <ligand>
        <name>ATP</name>
        <dbReference type="ChEBI" id="CHEBI:30616"/>
    </ligand>
</feature>
<feature type="binding site" evidence="1">
    <location>
        <position position="175"/>
    </location>
    <ligand>
        <name>ATP</name>
        <dbReference type="ChEBI" id="CHEBI:30616"/>
    </ligand>
</feature>
<name>TMCAL_STRA3</name>
<gene>
    <name evidence="1" type="primary">tmcAL</name>
    <name type="ordered locus">gbs1700</name>
</gene>
<reference key="1">
    <citation type="journal article" date="2002" name="Mol. Microbiol.">
        <title>Genome sequence of Streptococcus agalactiae, a pathogen causing invasive neonatal disease.</title>
        <authorList>
            <person name="Glaser P."/>
            <person name="Rusniok C."/>
            <person name="Buchrieser C."/>
            <person name="Chevalier F."/>
            <person name="Frangeul L."/>
            <person name="Msadek T."/>
            <person name="Zouine M."/>
            <person name="Couve E."/>
            <person name="Lalioui L."/>
            <person name="Poyart C."/>
            <person name="Trieu-Cuot P."/>
            <person name="Kunst F."/>
        </authorList>
    </citation>
    <scope>NUCLEOTIDE SEQUENCE [LARGE SCALE GENOMIC DNA]</scope>
    <source>
        <strain>NEM316</strain>
    </source>
</reference>
<sequence length="369" mass="41641">MTVTGIVAEFNPFHNGHKYLLEQAQGIKVIAMSGNFMQRGEPAIVDKWTRAQMALENGADLVIELPFLVSVQSADYFASGAVSILARLGVDNLCFGTEEMLDYDRIGDIYVNKKEEMEAFLKKQSDSLSYPQKTQAMWQEFAGIAFSGQTPNHILGLAYTKAASQNGIRLNPIQRQGAGYHSSEKTEIFASATSLRKHQSDRFFVEKGMPNSDLFLNSPQVVWQDYFSLLKYQIMTHSDLTQIYQVNEEIANRIKSQIRYVETVDELVDKVATKRYTKARIRRLLTYILINAVESPIPNAIHVLGFTQKGQQHLKSVKKSVDIVTRIGSQTWDSLTQRADSVYQMGNANIAEQTWGRIPFHQSVSQSDL</sequence>
<evidence type="ECO:0000255" key="1">
    <source>
        <dbReference type="HAMAP-Rule" id="MF_01539"/>
    </source>
</evidence>
<proteinExistence type="inferred from homology"/>
<accession>Q8E3Q6</accession>
<organism>
    <name type="scientific">Streptococcus agalactiae serotype III (strain NEM316)</name>
    <dbReference type="NCBI Taxonomy" id="211110"/>
    <lineage>
        <taxon>Bacteria</taxon>
        <taxon>Bacillati</taxon>
        <taxon>Bacillota</taxon>
        <taxon>Bacilli</taxon>
        <taxon>Lactobacillales</taxon>
        <taxon>Streptococcaceae</taxon>
        <taxon>Streptococcus</taxon>
    </lineage>
</organism>